<sequence>MLNRVQILMKTANNYETIEILRNYLRLYIILARNEEGHGILIYDDNIDSIMSMMNITRLEVIGLTTHCTKLRSSPPIPMSRLFMDEIDHESYYSPKTSDYPLIDIIRNRSHEQGDIALALERYGIDNTDSISEINEWLSSKGLACYRFVKFNDYRKQMYRKFSKCTIVDSMIIGHIGHHYIWIKNLETYTRPEIDVLPFDIKYISRDELWVRISSSLDQTHIKTIAVSVYGAITDNGPMPYMISTYPGNTFVNFNSVKDLILNFLDWIKDIMTSTRTIILVGYMSNLFDIPLLTVYWPNNCGWKIYNNILISSDGARVIWMDAYKFSCGLSLQDYCYHWGSKPESRPFDLIKKSDAKRNIKSWVKESMTSLKSLYEAFETQSGALEVLMSPCRMFSFSRIEDMFLTSVINRVSENTGMGMYYPTNDISSLFIESSICLDYIIVNNQESNKYRIKSVLDIISSKQYPAGRPNYVKNGTKGKLYIALCKVTVPTNDHIPVVYHDDDNTTTFITVLTSVDIETATRAGYSIVELGALQWDDNIPELKDCLLDSIKMIYDLNAATTNNLLEQLIENINFNNSSIILLFYTFAISYCRAFIYSIIETIDPVYISQFSYKELYISSSYKDINEVMSQMVKL</sequence>
<protein>
    <recommendedName>
        <fullName>Protein OPG056</fullName>
    </recommendedName>
    <alternativeName>
        <fullName>Protein F12 homolog</fullName>
    </alternativeName>
</protein>
<keyword id="KW-0244">Early protein</keyword>
<keyword id="KW-1039">Host endosome</keyword>
<keyword id="KW-0945">Host-virus interaction</keyword>
<keyword id="KW-0426">Late protein</keyword>
<keyword id="KW-0472">Membrane</keyword>
<keyword id="KW-1189">Microtubular outwards viral transport</keyword>
<keyword id="KW-1188">Viral release from host cell</keyword>
<keyword id="KW-0946">Virion</keyword>
<keyword id="KW-0843">Virulence</keyword>
<comment type="function">
    <text evidence="1">Plays a role in intracellular enveloped virus (IEV) transport to the cell surface through microtubule transport. Together with protein OPG064, forms a complex that interacts with host KLC2 (kinesin light chain isoform 2) to engage the kinesin-1 complex and thereby promote IEV trafficking.</text>
</comment>
<comment type="subunit">
    <text evidence="1">Interacts with protein OPG164. Interacts with protein OPG064.</text>
</comment>
<comment type="subcellular location">
    <subcellularLocation>
        <location evidence="1">Virion membrane</location>
    </subcellularLocation>
    <subcellularLocation>
        <location evidence="1">Host endosome</location>
    </subcellularLocation>
    <text evidence="1">Associates with the membrane of IEV particles, but not intracellular mature virus (IMV), cell-associated enveloped virus (CEV) or EEV. Colocalizes with microtubules.</text>
</comment>
<comment type="induction">
    <text evidence="1">Expressed in the early phase of the viral replicative cycle.</text>
</comment>
<comment type="similarity">
    <text evidence="2">Belongs to the orthopoxvirus OPG056 family.</text>
</comment>
<gene>
    <name type="primary">OPG056</name>
    <name type="ordered locus">CMLV047</name>
</gene>
<evidence type="ECO:0000250" key="1">
    <source>
        <dbReference type="UniProtKB" id="Q80HX6"/>
    </source>
</evidence>
<evidence type="ECO:0000305" key="2"/>
<accession>Q8V2X0</accession>
<feature type="chain" id="PRO_0000343641" description="Protein OPG056">
    <location>
        <begin position="1"/>
        <end position="635"/>
    </location>
</feature>
<organism>
    <name type="scientific">Camelpox virus (strain M-96)</name>
    <dbReference type="NCBI Taxonomy" id="203173"/>
    <lineage>
        <taxon>Viruses</taxon>
        <taxon>Varidnaviria</taxon>
        <taxon>Bamfordvirae</taxon>
        <taxon>Nucleocytoviricota</taxon>
        <taxon>Pokkesviricetes</taxon>
        <taxon>Chitovirales</taxon>
        <taxon>Poxviridae</taxon>
        <taxon>Chordopoxvirinae</taxon>
        <taxon>Orthopoxvirus</taxon>
        <taxon>Camelpox virus</taxon>
    </lineage>
</organism>
<dbReference type="EMBL" id="AF438165">
    <property type="protein sequence ID" value="AAL73754.1"/>
    <property type="molecule type" value="Genomic_DNA"/>
</dbReference>
<dbReference type="RefSeq" id="NP_570437.1">
    <property type="nucleotide sequence ID" value="NC_003391.1"/>
</dbReference>
<dbReference type="KEGG" id="vg:932580"/>
<dbReference type="Proteomes" id="UP000152221">
    <property type="component" value="Genome"/>
</dbReference>
<dbReference type="GO" id="GO:0043657">
    <property type="term" value="C:host cell"/>
    <property type="evidence" value="ECO:0007669"/>
    <property type="project" value="GOC"/>
</dbReference>
<dbReference type="GO" id="GO:0044174">
    <property type="term" value="C:host cell endosome"/>
    <property type="evidence" value="ECO:0007669"/>
    <property type="project" value="UniProtKB-SubCell"/>
</dbReference>
<dbReference type="GO" id="GO:0016020">
    <property type="term" value="C:membrane"/>
    <property type="evidence" value="ECO:0007669"/>
    <property type="project" value="UniProtKB-KW"/>
</dbReference>
<dbReference type="GO" id="GO:0055036">
    <property type="term" value="C:virion membrane"/>
    <property type="evidence" value="ECO:0007669"/>
    <property type="project" value="UniProtKB-SubCell"/>
</dbReference>
<dbReference type="GO" id="GO:0039701">
    <property type="term" value="P:microtubule-dependent intracellular transport of viral material towards cell periphery"/>
    <property type="evidence" value="ECO:0007669"/>
    <property type="project" value="UniProtKB-KW"/>
</dbReference>
<dbReference type="InterPro" id="IPR005005">
    <property type="entry name" value="Poxvirus_F12L"/>
</dbReference>
<dbReference type="InterPro" id="IPR012337">
    <property type="entry name" value="RNaseH-like_sf"/>
</dbReference>
<dbReference type="Pfam" id="PF03337">
    <property type="entry name" value="Pox_F12L"/>
    <property type="match status" value="1"/>
</dbReference>
<dbReference type="PIRSF" id="PIRSF015793">
    <property type="entry name" value="VAC_EEV"/>
    <property type="match status" value="1"/>
</dbReference>
<dbReference type="SUPFAM" id="SSF53098">
    <property type="entry name" value="Ribonuclease H-like"/>
    <property type="match status" value="1"/>
</dbReference>
<reference key="1">
    <citation type="journal article" date="2002" name="Virology">
        <title>The genome of camelpox virus.</title>
        <authorList>
            <person name="Afonso C.L."/>
            <person name="Tulman E.R."/>
            <person name="Lu Z."/>
            <person name="Zsak L."/>
            <person name="Sandybaev N.T."/>
            <person name="Kerembekova U.Z."/>
            <person name="Zaitsev V.L."/>
            <person name="Kutish G.F."/>
            <person name="Rock D.L."/>
        </authorList>
    </citation>
    <scope>NUCLEOTIDE SEQUENCE [LARGE SCALE GENOMIC DNA]</scope>
</reference>
<name>PG056_CAMPM</name>
<proteinExistence type="inferred from homology"/>
<organismHost>
    <name type="scientific">Camelus</name>
    <dbReference type="NCBI Taxonomy" id="9836"/>
</organismHost>